<organism>
    <name type="scientific">Mus musculus</name>
    <name type="common">Mouse</name>
    <dbReference type="NCBI Taxonomy" id="10090"/>
    <lineage>
        <taxon>Eukaryota</taxon>
        <taxon>Metazoa</taxon>
        <taxon>Chordata</taxon>
        <taxon>Craniata</taxon>
        <taxon>Vertebrata</taxon>
        <taxon>Euteleostomi</taxon>
        <taxon>Mammalia</taxon>
        <taxon>Eutheria</taxon>
        <taxon>Euarchontoglires</taxon>
        <taxon>Glires</taxon>
        <taxon>Rodentia</taxon>
        <taxon>Myomorpha</taxon>
        <taxon>Muroidea</taxon>
        <taxon>Muridae</taxon>
        <taxon>Murinae</taxon>
        <taxon>Mus</taxon>
        <taxon>Mus</taxon>
    </lineage>
</organism>
<reference key="1">
    <citation type="journal article" date="2004" name="Genome Res.">
        <title>The status, quality, and expansion of the NIH full-length cDNA project: the Mammalian Gene Collection (MGC).</title>
        <authorList>
            <consortium name="The MGC Project Team"/>
        </authorList>
    </citation>
    <scope>NUCLEOTIDE SEQUENCE [LARGE SCALE MRNA] (ISOFORMS 1 AND 2)</scope>
    <source>
        <strain>C57BL/6J</strain>
        <tissue>Brain</tissue>
        <tissue>Thymus</tissue>
    </source>
</reference>
<reference key="2">
    <citation type="submission" date="2005-02" db="EMBL/GenBank/DDBJ databases">
        <title>Prediction of the coding sequences of mouse homologues of KIAA gene. The complete nucleotide sequences of mouse KIAA-homologous cDNAs identified by screening of terminal sequences of cDNA clones randomly sampled from size-fractionated libraries.</title>
        <authorList>
            <person name="Okazaki N."/>
            <person name="Kikuno R.F."/>
            <person name="Ohara R."/>
            <person name="Inamoto S."/>
            <person name="Nagase T."/>
            <person name="Ohara O."/>
            <person name="Koga H."/>
        </authorList>
    </citation>
    <scope>NUCLEOTIDE SEQUENCE [LARGE SCALE MRNA] OF 1-510 (ISOFORM 1)</scope>
    <source>
        <tissue>Fetal brain</tissue>
    </source>
</reference>
<reference key="3">
    <citation type="journal article" date="2005" name="Science">
        <title>The transcriptional landscape of the mammalian genome.</title>
        <authorList>
            <person name="Carninci P."/>
            <person name="Kasukawa T."/>
            <person name="Katayama S."/>
            <person name="Gough J."/>
            <person name="Frith M.C."/>
            <person name="Maeda N."/>
            <person name="Oyama R."/>
            <person name="Ravasi T."/>
            <person name="Lenhard B."/>
            <person name="Wells C."/>
            <person name="Kodzius R."/>
            <person name="Shimokawa K."/>
            <person name="Bajic V.B."/>
            <person name="Brenner S.E."/>
            <person name="Batalov S."/>
            <person name="Forrest A.R."/>
            <person name="Zavolan M."/>
            <person name="Davis M.J."/>
            <person name="Wilming L.G."/>
            <person name="Aidinis V."/>
            <person name="Allen J.E."/>
            <person name="Ambesi-Impiombato A."/>
            <person name="Apweiler R."/>
            <person name="Aturaliya R.N."/>
            <person name="Bailey T.L."/>
            <person name="Bansal M."/>
            <person name="Baxter L."/>
            <person name="Beisel K.W."/>
            <person name="Bersano T."/>
            <person name="Bono H."/>
            <person name="Chalk A.M."/>
            <person name="Chiu K.P."/>
            <person name="Choudhary V."/>
            <person name="Christoffels A."/>
            <person name="Clutterbuck D.R."/>
            <person name="Crowe M.L."/>
            <person name="Dalla E."/>
            <person name="Dalrymple B.P."/>
            <person name="de Bono B."/>
            <person name="Della Gatta G."/>
            <person name="di Bernardo D."/>
            <person name="Down T."/>
            <person name="Engstrom P."/>
            <person name="Fagiolini M."/>
            <person name="Faulkner G."/>
            <person name="Fletcher C.F."/>
            <person name="Fukushima T."/>
            <person name="Furuno M."/>
            <person name="Futaki S."/>
            <person name="Gariboldi M."/>
            <person name="Georgii-Hemming P."/>
            <person name="Gingeras T.R."/>
            <person name="Gojobori T."/>
            <person name="Green R.E."/>
            <person name="Gustincich S."/>
            <person name="Harbers M."/>
            <person name="Hayashi Y."/>
            <person name="Hensch T.K."/>
            <person name="Hirokawa N."/>
            <person name="Hill D."/>
            <person name="Huminiecki L."/>
            <person name="Iacono M."/>
            <person name="Ikeo K."/>
            <person name="Iwama A."/>
            <person name="Ishikawa T."/>
            <person name="Jakt M."/>
            <person name="Kanapin A."/>
            <person name="Katoh M."/>
            <person name="Kawasawa Y."/>
            <person name="Kelso J."/>
            <person name="Kitamura H."/>
            <person name="Kitano H."/>
            <person name="Kollias G."/>
            <person name="Krishnan S.P."/>
            <person name="Kruger A."/>
            <person name="Kummerfeld S.K."/>
            <person name="Kurochkin I.V."/>
            <person name="Lareau L.F."/>
            <person name="Lazarevic D."/>
            <person name="Lipovich L."/>
            <person name="Liu J."/>
            <person name="Liuni S."/>
            <person name="McWilliam S."/>
            <person name="Madan Babu M."/>
            <person name="Madera M."/>
            <person name="Marchionni L."/>
            <person name="Matsuda H."/>
            <person name="Matsuzawa S."/>
            <person name="Miki H."/>
            <person name="Mignone F."/>
            <person name="Miyake S."/>
            <person name="Morris K."/>
            <person name="Mottagui-Tabar S."/>
            <person name="Mulder N."/>
            <person name="Nakano N."/>
            <person name="Nakauchi H."/>
            <person name="Ng P."/>
            <person name="Nilsson R."/>
            <person name="Nishiguchi S."/>
            <person name="Nishikawa S."/>
            <person name="Nori F."/>
            <person name="Ohara O."/>
            <person name="Okazaki Y."/>
            <person name="Orlando V."/>
            <person name="Pang K.C."/>
            <person name="Pavan W.J."/>
            <person name="Pavesi G."/>
            <person name="Pesole G."/>
            <person name="Petrovsky N."/>
            <person name="Piazza S."/>
            <person name="Reed J."/>
            <person name="Reid J.F."/>
            <person name="Ring B.Z."/>
            <person name="Ringwald M."/>
            <person name="Rost B."/>
            <person name="Ruan Y."/>
            <person name="Salzberg S.L."/>
            <person name="Sandelin A."/>
            <person name="Schneider C."/>
            <person name="Schoenbach C."/>
            <person name="Sekiguchi K."/>
            <person name="Semple C.A."/>
            <person name="Seno S."/>
            <person name="Sessa L."/>
            <person name="Sheng Y."/>
            <person name="Shibata Y."/>
            <person name="Shimada H."/>
            <person name="Shimada K."/>
            <person name="Silva D."/>
            <person name="Sinclair B."/>
            <person name="Sperling S."/>
            <person name="Stupka E."/>
            <person name="Sugiura K."/>
            <person name="Sultana R."/>
            <person name="Takenaka Y."/>
            <person name="Taki K."/>
            <person name="Tammoja K."/>
            <person name="Tan S.L."/>
            <person name="Tang S."/>
            <person name="Taylor M.S."/>
            <person name="Tegner J."/>
            <person name="Teichmann S.A."/>
            <person name="Ueda H.R."/>
            <person name="van Nimwegen E."/>
            <person name="Verardo R."/>
            <person name="Wei C.L."/>
            <person name="Yagi K."/>
            <person name="Yamanishi H."/>
            <person name="Zabarovsky E."/>
            <person name="Zhu S."/>
            <person name="Zimmer A."/>
            <person name="Hide W."/>
            <person name="Bult C."/>
            <person name="Grimmond S.M."/>
            <person name="Teasdale R.D."/>
            <person name="Liu E.T."/>
            <person name="Brusic V."/>
            <person name="Quackenbush J."/>
            <person name="Wahlestedt C."/>
            <person name="Mattick J.S."/>
            <person name="Hume D.A."/>
            <person name="Kai C."/>
            <person name="Sasaki D."/>
            <person name="Tomaru Y."/>
            <person name="Fukuda S."/>
            <person name="Kanamori-Katayama M."/>
            <person name="Suzuki M."/>
            <person name="Aoki J."/>
            <person name="Arakawa T."/>
            <person name="Iida J."/>
            <person name="Imamura K."/>
            <person name="Itoh M."/>
            <person name="Kato T."/>
            <person name="Kawaji H."/>
            <person name="Kawagashira N."/>
            <person name="Kawashima T."/>
            <person name="Kojima M."/>
            <person name="Kondo S."/>
            <person name="Konno H."/>
            <person name="Nakano K."/>
            <person name="Ninomiya N."/>
            <person name="Nishio T."/>
            <person name="Okada M."/>
            <person name="Plessy C."/>
            <person name="Shibata K."/>
            <person name="Shiraki T."/>
            <person name="Suzuki S."/>
            <person name="Tagami M."/>
            <person name="Waki K."/>
            <person name="Watahiki A."/>
            <person name="Okamura-Oho Y."/>
            <person name="Suzuki H."/>
            <person name="Kawai J."/>
            <person name="Hayashizaki Y."/>
        </authorList>
    </citation>
    <scope>NUCLEOTIDE SEQUENCE [LARGE SCALE MRNA] OF 436-519 (ISOFORMS 1/2)</scope>
    <source>
        <strain>C57BL/6J</strain>
    </source>
</reference>
<comment type="function">
    <text evidence="1">Putative tyrosine carboxypeptidase.</text>
</comment>
<comment type="cofactor">
    <cofactor evidence="1">
        <name>Zn(2+)</name>
        <dbReference type="ChEBI" id="CHEBI:29105"/>
    </cofactor>
    <text evidence="1">Binds 1 zinc ion per subunit.</text>
</comment>
<comment type="alternative products">
    <event type="alternative splicing"/>
    <isoform>
        <id>Q7TQE7-1</id>
        <name>1</name>
        <sequence type="displayed"/>
    </isoform>
    <isoform>
        <id>Q7TQE7-2</id>
        <name>2</name>
        <sequence type="described" ref="VSP_031688"/>
    </isoform>
</comment>
<comment type="domain">
    <text evidence="1">Putative metalloprotease with an atypical HExxxH zinc-binding motif instead of HExxH, which interrupts the active site-containing helix without affecting the integrity of the catalytic site arrangement.</text>
</comment>
<comment type="sequence caution" evidence="4">
    <conflict type="erroneous initiation">
        <sequence resource="EMBL-CDS" id="BAD90420"/>
    </conflict>
</comment>
<sequence>MLESIRVTEKLHWPEHELAKKFVLNAEEALITDSKRSFSSLSSGILKDTFTTGTSSYNVLLQSKEEKKHRSQKRFSSASSKQHRKPSKSPSSSHSKDPSRMTALVPGTGAGTWYCLDGQSAVFVTSSVPSPVKFTRDISITGSGLALPPKPKSKVKRRNLTRLPKPKQQPQLCRSFERGDDISGKKLCILTAIKPINLEKEKLRFFKSDYTYNPQFEYANPTLPGVLAKHSNASDRFLKQSINIMELTLQKYGSYEKFEQATGGSLLSKTRIWSHVRKYMVKEGCLGEIVVHLTEDLLSRASMTVVNGCPTLTINISTAREHWLEGMLRHEIGTHYFRGINNLQQPWNSWIGRKKHELKPNNPTEEGLASIHSVLFRKDPFLWRAALLYYTVYKASHMSFCELFKDIGKFVKDPNTRWDYCVRAKRGWTDTSEPGCFSKDQVYLDGVLQILRFRESIDFHLLTALGKVSYEDVDRLKELAVTENMRVPHFLHDHSRYMEHLERIMEVNELTDAELKNLI</sequence>
<gene>
    <name evidence="1" type="primary">Matcap2</name>
    <name evidence="5" type="synonym">Kiaa0895</name>
</gene>
<name>MACA2_MOUSE</name>
<evidence type="ECO:0000250" key="1">
    <source>
        <dbReference type="UniProtKB" id="Q68EN5"/>
    </source>
</evidence>
<evidence type="ECO:0000256" key="2">
    <source>
        <dbReference type="SAM" id="MobiDB-lite"/>
    </source>
</evidence>
<evidence type="ECO:0000303" key="3">
    <source>
    </source>
</evidence>
<evidence type="ECO:0000305" key="4"/>
<evidence type="ECO:0000312" key="5">
    <source>
        <dbReference type="EMBL" id="BAD90420.1"/>
    </source>
</evidence>
<dbReference type="EC" id="3.4.17.-" evidence="1"/>
<dbReference type="EMBL" id="BC039998">
    <property type="protein sequence ID" value="AAH39998.1"/>
    <property type="molecule type" value="mRNA"/>
</dbReference>
<dbReference type="EMBL" id="BC054761">
    <property type="protein sequence ID" value="AAH54761.2"/>
    <property type="molecule type" value="mRNA"/>
</dbReference>
<dbReference type="EMBL" id="AK220359">
    <property type="protein sequence ID" value="BAD90420.1"/>
    <property type="status" value="ALT_INIT"/>
    <property type="molecule type" value="mRNA"/>
</dbReference>
<dbReference type="EMBL" id="AK003384">
    <property type="protein sequence ID" value="BAB22754.1"/>
    <property type="molecule type" value="mRNA"/>
</dbReference>
<dbReference type="CCDS" id="CCDS40563.1">
    <molecule id="Q7TQE7-1"/>
</dbReference>
<dbReference type="RefSeq" id="NP_081015.1">
    <molecule id="Q7TQE7-1"/>
    <property type="nucleotide sequence ID" value="NM_026739.3"/>
</dbReference>
<dbReference type="RefSeq" id="XP_006510636.1">
    <molecule id="Q7TQE7-2"/>
    <property type="nucleotide sequence ID" value="XM_006510573.2"/>
</dbReference>
<dbReference type="RefSeq" id="XP_011240894.1">
    <molecule id="Q7TQE7-2"/>
    <property type="nucleotide sequence ID" value="XM_011242592.2"/>
</dbReference>
<dbReference type="RefSeq" id="XP_017169037.1">
    <molecule id="Q7TQE7-2"/>
    <property type="nucleotide sequence ID" value="XM_017313548.1"/>
</dbReference>
<dbReference type="SMR" id="Q7TQE7"/>
<dbReference type="BioGRID" id="212785">
    <property type="interactions" value="1"/>
</dbReference>
<dbReference type="FunCoup" id="Q7TQE7">
    <property type="interactions" value="44"/>
</dbReference>
<dbReference type="STRING" id="10090.ENSMUSP00000062120"/>
<dbReference type="PhosphoSitePlus" id="Q7TQE7"/>
<dbReference type="PaxDb" id="10090-ENSMUSP00000062120"/>
<dbReference type="ProteomicsDB" id="269039">
    <molecule id="Q7TQE7-1"/>
</dbReference>
<dbReference type="ProteomicsDB" id="269040">
    <molecule id="Q7TQE7-2"/>
</dbReference>
<dbReference type="Antibodypedia" id="66049">
    <property type="antibodies" value="23 antibodies from 10 providers"/>
</dbReference>
<dbReference type="DNASU" id="68283"/>
<dbReference type="Ensembl" id="ENSMUST00000058868.9">
    <molecule id="Q7TQE7-1"/>
    <property type="protein sequence ID" value="ENSMUSP00000062120.8"/>
    <property type="gene ID" value="ENSMUSG00000036411.11"/>
</dbReference>
<dbReference type="GeneID" id="68283"/>
<dbReference type="KEGG" id="mmu:68283"/>
<dbReference type="UCSC" id="uc009oom.1">
    <molecule id="Q7TQE7-1"/>
    <property type="organism name" value="mouse"/>
</dbReference>
<dbReference type="AGR" id="MGI:1915533"/>
<dbReference type="CTD" id="23366"/>
<dbReference type="MGI" id="MGI:1915533">
    <property type="gene designation" value="Matcap2"/>
</dbReference>
<dbReference type="VEuPathDB" id="HostDB:ENSMUSG00000036411"/>
<dbReference type="eggNOG" id="ENOG502QQGI">
    <property type="taxonomic scope" value="Eukaryota"/>
</dbReference>
<dbReference type="GeneTree" id="ENSGT00390000004417"/>
<dbReference type="HOGENOM" id="CLU_038689_1_0_1"/>
<dbReference type="InParanoid" id="Q7TQE7"/>
<dbReference type="OMA" id="CNHEIGT"/>
<dbReference type="OrthoDB" id="449345at2759"/>
<dbReference type="PhylomeDB" id="Q7TQE7"/>
<dbReference type="TreeFam" id="TF329621"/>
<dbReference type="BioGRID-ORCS" id="68283">
    <property type="hits" value="0 hits in 76 CRISPR screens"/>
</dbReference>
<dbReference type="ChiTaRS" id="9530077C05Rik">
    <property type="organism name" value="mouse"/>
</dbReference>
<dbReference type="PRO" id="PR:Q7TQE7"/>
<dbReference type="Proteomes" id="UP000000589">
    <property type="component" value="Chromosome 9"/>
</dbReference>
<dbReference type="RNAct" id="Q7TQE7">
    <property type="molecule type" value="protein"/>
</dbReference>
<dbReference type="Bgee" id="ENSMUSG00000036411">
    <property type="expression patterns" value="Expressed in spermatocyte and 112 other cell types or tissues"/>
</dbReference>
<dbReference type="ExpressionAtlas" id="Q7TQE7">
    <property type="expression patterns" value="baseline and differential"/>
</dbReference>
<dbReference type="GO" id="GO:0004180">
    <property type="term" value="F:carboxypeptidase activity"/>
    <property type="evidence" value="ECO:0007669"/>
    <property type="project" value="UniProtKB-KW"/>
</dbReference>
<dbReference type="GO" id="GO:0046872">
    <property type="term" value="F:metal ion binding"/>
    <property type="evidence" value="ECO:0007669"/>
    <property type="project" value="UniProtKB-KW"/>
</dbReference>
<dbReference type="GO" id="GO:0008237">
    <property type="term" value="F:metallopeptidase activity"/>
    <property type="evidence" value="ECO:0007669"/>
    <property type="project" value="UniProtKB-KW"/>
</dbReference>
<dbReference type="GO" id="GO:0006508">
    <property type="term" value="P:proteolysis"/>
    <property type="evidence" value="ECO:0007669"/>
    <property type="project" value="UniProtKB-KW"/>
</dbReference>
<dbReference type="InterPro" id="IPR012548">
    <property type="entry name" value="MATCAP"/>
</dbReference>
<dbReference type="PANTHER" id="PTHR31817">
    <property type="match status" value="1"/>
</dbReference>
<dbReference type="PANTHER" id="PTHR31817:SF3">
    <property type="entry name" value="TYROSINE CARBOXYPEPTIDASE MATCAP2-RELATED"/>
    <property type="match status" value="1"/>
</dbReference>
<dbReference type="Pfam" id="PF08014">
    <property type="entry name" value="MATCAP"/>
    <property type="match status" value="1"/>
</dbReference>
<dbReference type="SMART" id="SM01154">
    <property type="entry name" value="DUF1704"/>
    <property type="match status" value="1"/>
</dbReference>
<feature type="chain" id="PRO_0000320618" description="Putative tyrosine carboxypeptidase MATCAP2">
    <location>
        <begin position="1"/>
        <end position="519"/>
    </location>
</feature>
<feature type="region of interest" description="Disordered" evidence="2">
    <location>
        <begin position="63"/>
        <end position="103"/>
    </location>
</feature>
<feature type="active site" description="Nucleophile" evidence="1">
    <location>
        <position position="331"/>
    </location>
</feature>
<feature type="binding site" evidence="1">
    <location>
        <position position="330"/>
    </location>
    <ligand>
        <name>Zn(2+)</name>
        <dbReference type="ChEBI" id="CHEBI:29105"/>
        <note>catalytic</note>
    </ligand>
</feature>
<feature type="binding site" evidence="1">
    <location>
        <position position="335"/>
    </location>
    <ligand>
        <name>Zn(2+)</name>
        <dbReference type="ChEBI" id="CHEBI:29105"/>
        <note>catalytic</note>
    </ligand>
</feature>
<feature type="binding site" evidence="1">
    <location>
        <position position="366"/>
    </location>
    <ligand>
        <name>Zn(2+)</name>
        <dbReference type="ChEBI" id="CHEBI:29105"/>
        <note>catalytic</note>
    </ligand>
</feature>
<feature type="splice variant" id="VSP_031688" description="In isoform 2." evidence="3">
    <location>
        <begin position="1"/>
        <end position="244"/>
    </location>
</feature>
<accession>Q7TQE7</accession>
<accession>Q5DU11</accession>
<accession>Q80V66</accession>
<accession>Q9CTJ2</accession>
<keyword id="KW-0025">Alternative splicing</keyword>
<keyword id="KW-0121">Carboxypeptidase</keyword>
<keyword id="KW-0378">Hydrolase</keyword>
<keyword id="KW-0479">Metal-binding</keyword>
<keyword id="KW-0482">Metalloprotease</keyword>
<keyword id="KW-0645">Protease</keyword>
<keyword id="KW-1185">Reference proteome</keyword>
<keyword id="KW-0862">Zinc</keyword>
<proteinExistence type="evidence at transcript level"/>
<protein>
    <recommendedName>
        <fullName evidence="1">Putative tyrosine carboxypeptidase MATCAP2</fullName>
        <ecNumber evidence="1">3.4.17.-</ecNumber>
    </recommendedName>
</protein>